<name>PYRG_HAEIN</name>
<proteinExistence type="inferred from homology"/>
<keyword id="KW-0067">ATP-binding</keyword>
<keyword id="KW-0315">Glutamine amidotransferase</keyword>
<keyword id="KW-0436">Ligase</keyword>
<keyword id="KW-0460">Magnesium</keyword>
<keyword id="KW-0479">Metal-binding</keyword>
<keyword id="KW-0547">Nucleotide-binding</keyword>
<keyword id="KW-0665">Pyrimidine biosynthesis</keyword>
<keyword id="KW-1185">Reference proteome</keyword>
<comment type="function">
    <text evidence="1">Catalyzes the ATP-dependent amination of UTP to CTP with either L-glutamine or ammonia as the source of nitrogen. Regulates intracellular CTP levels through interactions with the four ribonucleotide triphosphates.</text>
</comment>
<comment type="catalytic activity">
    <reaction evidence="1">
        <text>UTP + L-glutamine + ATP + H2O = CTP + L-glutamate + ADP + phosphate + 2 H(+)</text>
        <dbReference type="Rhea" id="RHEA:26426"/>
        <dbReference type="ChEBI" id="CHEBI:15377"/>
        <dbReference type="ChEBI" id="CHEBI:15378"/>
        <dbReference type="ChEBI" id="CHEBI:29985"/>
        <dbReference type="ChEBI" id="CHEBI:30616"/>
        <dbReference type="ChEBI" id="CHEBI:37563"/>
        <dbReference type="ChEBI" id="CHEBI:43474"/>
        <dbReference type="ChEBI" id="CHEBI:46398"/>
        <dbReference type="ChEBI" id="CHEBI:58359"/>
        <dbReference type="ChEBI" id="CHEBI:456216"/>
        <dbReference type="EC" id="6.3.4.2"/>
    </reaction>
</comment>
<comment type="catalytic activity">
    <reaction evidence="1">
        <text>L-glutamine + H2O = L-glutamate + NH4(+)</text>
        <dbReference type="Rhea" id="RHEA:15889"/>
        <dbReference type="ChEBI" id="CHEBI:15377"/>
        <dbReference type="ChEBI" id="CHEBI:28938"/>
        <dbReference type="ChEBI" id="CHEBI:29985"/>
        <dbReference type="ChEBI" id="CHEBI:58359"/>
    </reaction>
</comment>
<comment type="catalytic activity">
    <reaction evidence="1">
        <text>UTP + NH4(+) + ATP = CTP + ADP + phosphate + 2 H(+)</text>
        <dbReference type="Rhea" id="RHEA:16597"/>
        <dbReference type="ChEBI" id="CHEBI:15378"/>
        <dbReference type="ChEBI" id="CHEBI:28938"/>
        <dbReference type="ChEBI" id="CHEBI:30616"/>
        <dbReference type="ChEBI" id="CHEBI:37563"/>
        <dbReference type="ChEBI" id="CHEBI:43474"/>
        <dbReference type="ChEBI" id="CHEBI:46398"/>
        <dbReference type="ChEBI" id="CHEBI:456216"/>
    </reaction>
</comment>
<comment type="activity regulation">
    <text evidence="1">Allosterically activated by GTP, when glutamine is the substrate; GTP has no effect on the reaction when ammonia is the substrate. The allosteric effector GTP functions by stabilizing the protein conformation that binds the tetrahedral intermediate(s) formed during glutamine hydrolysis. Inhibited by the product CTP, via allosteric rather than competitive inhibition.</text>
</comment>
<comment type="pathway">
    <text evidence="1">Pyrimidine metabolism; CTP biosynthesis via de novo pathway; CTP from UDP: step 2/2.</text>
</comment>
<comment type="subunit">
    <text evidence="1">Homotetramer.</text>
</comment>
<comment type="miscellaneous">
    <text evidence="1">CTPSs have evolved a hybrid strategy for distinguishing between UTP and CTP. The overlapping regions of the product feedback inhibitory and substrate sites recognize a common feature in both compounds, the triphosphate moiety. To differentiate isosteric substrate and product pyrimidine rings, an additional pocket far from the expected kinase/ligase catalytic site, specifically recognizes the cytosine and ribose portions of the product inhibitor.</text>
</comment>
<comment type="similarity">
    <text evidence="1">Belongs to the CTP synthase family.</text>
</comment>
<dbReference type="EC" id="6.3.4.2" evidence="1"/>
<dbReference type="EMBL" id="L42023">
    <property type="protein sequence ID" value="AAC22733.1"/>
    <property type="molecule type" value="Genomic_DNA"/>
</dbReference>
<dbReference type="PIR" id="F64181">
    <property type="entry name" value="F64181"/>
</dbReference>
<dbReference type="RefSeq" id="NP_439233.1">
    <property type="nucleotide sequence ID" value="NC_000907.1"/>
</dbReference>
<dbReference type="SMR" id="P44341"/>
<dbReference type="STRING" id="71421.HI_1077"/>
<dbReference type="EnsemblBacteria" id="AAC22733">
    <property type="protein sequence ID" value="AAC22733"/>
    <property type="gene ID" value="HI_1077"/>
</dbReference>
<dbReference type="KEGG" id="hin:HI_1077"/>
<dbReference type="PATRIC" id="fig|71421.8.peg.1119"/>
<dbReference type="eggNOG" id="COG0504">
    <property type="taxonomic scope" value="Bacteria"/>
</dbReference>
<dbReference type="HOGENOM" id="CLU_011675_5_0_6"/>
<dbReference type="OrthoDB" id="9801107at2"/>
<dbReference type="PhylomeDB" id="P44341"/>
<dbReference type="BioCyc" id="HINF71421:G1GJ1-1111-MONOMER"/>
<dbReference type="UniPathway" id="UPA00159">
    <property type="reaction ID" value="UER00277"/>
</dbReference>
<dbReference type="Proteomes" id="UP000000579">
    <property type="component" value="Chromosome"/>
</dbReference>
<dbReference type="GO" id="GO:0005829">
    <property type="term" value="C:cytosol"/>
    <property type="evidence" value="ECO:0000318"/>
    <property type="project" value="GO_Central"/>
</dbReference>
<dbReference type="GO" id="GO:0005524">
    <property type="term" value="F:ATP binding"/>
    <property type="evidence" value="ECO:0007669"/>
    <property type="project" value="UniProtKB-KW"/>
</dbReference>
<dbReference type="GO" id="GO:0003883">
    <property type="term" value="F:CTP synthase activity"/>
    <property type="evidence" value="ECO:0000318"/>
    <property type="project" value="GO_Central"/>
</dbReference>
<dbReference type="GO" id="GO:0004359">
    <property type="term" value="F:glutaminase activity"/>
    <property type="evidence" value="ECO:0007669"/>
    <property type="project" value="RHEA"/>
</dbReference>
<dbReference type="GO" id="GO:0042802">
    <property type="term" value="F:identical protein binding"/>
    <property type="evidence" value="ECO:0000318"/>
    <property type="project" value="GO_Central"/>
</dbReference>
<dbReference type="GO" id="GO:0046872">
    <property type="term" value="F:metal ion binding"/>
    <property type="evidence" value="ECO:0007669"/>
    <property type="project" value="UniProtKB-KW"/>
</dbReference>
<dbReference type="GO" id="GO:0044210">
    <property type="term" value="P:'de novo' CTP biosynthetic process"/>
    <property type="evidence" value="ECO:0007669"/>
    <property type="project" value="UniProtKB-UniRule"/>
</dbReference>
<dbReference type="GO" id="GO:0006241">
    <property type="term" value="P:CTP biosynthetic process"/>
    <property type="evidence" value="ECO:0000318"/>
    <property type="project" value="GO_Central"/>
</dbReference>
<dbReference type="GO" id="GO:0019856">
    <property type="term" value="P:pyrimidine nucleobase biosynthetic process"/>
    <property type="evidence" value="ECO:0000318"/>
    <property type="project" value="GO_Central"/>
</dbReference>
<dbReference type="CDD" id="cd03113">
    <property type="entry name" value="CTPS_N"/>
    <property type="match status" value="1"/>
</dbReference>
<dbReference type="CDD" id="cd01746">
    <property type="entry name" value="GATase1_CTP_Synthase"/>
    <property type="match status" value="1"/>
</dbReference>
<dbReference type="FunFam" id="3.40.50.300:FF:000009">
    <property type="entry name" value="CTP synthase"/>
    <property type="match status" value="1"/>
</dbReference>
<dbReference type="FunFam" id="3.40.50.880:FF:000002">
    <property type="entry name" value="CTP synthase"/>
    <property type="match status" value="1"/>
</dbReference>
<dbReference type="Gene3D" id="3.40.50.880">
    <property type="match status" value="1"/>
</dbReference>
<dbReference type="Gene3D" id="3.40.50.300">
    <property type="entry name" value="P-loop containing nucleotide triphosphate hydrolases"/>
    <property type="match status" value="1"/>
</dbReference>
<dbReference type="HAMAP" id="MF_01227">
    <property type="entry name" value="PyrG"/>
    <property type="match status" value="1"/>
</dbReference>
<dbReference type="InterPro" id="IPR029062">
    <property type="entry name" value="Class_I_gatase-like"/>
</dbReference>
<dbReference type="InterPro" id="IPR004468">
    <property type="entry name" value="CTP_synthase"/>
</dbReference>
<dbReference type="InterPro" id="IPR017456">
    <property type="entry name" value="CTP_synthase_N"/>
</dbReference>
<dbReference type="InterPro" id="IPR017926">
    <property type="entry name" value="GATASE"/>
</dbReference>
<dbReference type="InterPro" id="IPR033828">
    <property type="entry name" value="GATase1_CTP_Synthase"/>
</dbReference>
<dbReference type="InterPro" id="IPR027417">
    <property type="entry name" value="P-loop_NTPase"/>
</dbReference>
<dbReference type="NCBIfam" id="NF003792">
    <property type="entry name" value="PRK05380.1"/>
    <property type="match status" value="1"/>
</dbReference>
<dbReference type="NCBIfam" id="TIGR00337">
    <property type="entry name" value="PyrG"/>
    <property type="match status" value="1"/>
</dbReference>
<dbReference type="PANTHER" id="PTHR11550">
    <property type="entry name" value="CTP SYNTHASE"/>
    <property type="match status" value="1"/>
</dbReference>
<dbReference type="PANTHER" id="PTHR11550:SF0">
    <property type="entry name" value="CTP SYNTHASE-RELATED"/>
    <property type="match status" value="1"/>
</dbReference>
<dbReference type="Pfam" id="PF06418">
    <property type="entry name" value="CTP_synth_N"/>
    <property type="match status" value="1"/>
</dbReference>
<dbReference type="Pfam" id="PF00117">
    <property type="entry name" value="GATase"/>
    <property type="match status" value="1"/>
</dbReference>
<dbReference type="SUPFAM" id="SSF52317">
    <property type="entry name" value="Class I glutamine amidotransferase-like"/>
    <property type="match status" value="1"/>
</dbReference>
<dbReference type="SUPFAM" id="SSF52540">
    <property type="entry name" value="P-loop containing nucleoside triphosphate hydrolases"/>
    <property type="match status" value="1"/>
</dbReference>
<dbReference type="PROSITE" id="PS51273">
    <property type="entry name" value="GATASE_TYPE_1"/>
    <property type="match status" value="1"/>
</dbReference>
<evidence type="ECO:0000255" key="1">
    <source>
        <dbReference type="HAMAP-Rule" id="MF_01227"/>
    </source>
</evidence>
<sequence length="545" mass="60253">MATNYIFVTGGVVSSLGKGIAAASLAAILEARGLNVTIMKLDPYINVDPGTMSPTQHGEVFVTQDGAETDLDLGHYERFIRTKMTKRNNFTTGKIYSEVLRKERRGDYLGATIQVIPHITNEIKDRVIAGAQGHDVVIVEVGGTVGDIESLPFLEALRQLAVQVGREHTLFMHLTLVPYIPTAGEVKTKPTQHSVKELLSIGIQPDVLICRSDRMIPPNERAKIALFCNVAERAVISLKDVNSIYQIPALLKSQGLDDFVCERFRLTCPEADLTEWEQVLYKQANPVGEVTIGMVGKYTELPDAYKSVNEALKHAGLTNRLSVNIKYIDSQDVETKGVEVLKGIDGILVPGGFGYRGVEGKIRTAQYARENKIPYLGICLGMQIALIEYARNVAGLTKANSSEFDKDCEQPVVALITEWQDAEGNTEVRTDESDLGGTMRLGAQQCHLVSGSRARELYGKETIEERHRHRYEVNNTLLPQIEKAGLKVTGLSADKKLVEIIEVPNHPWFVACQFHPEFTSTPRDGHPLFAGFVKAAYENHKKSVK</sequence>
<feature type="chain" id="PRO_0000138188" description="CTP synthase">
    <location>
        <begin position="1"/>
        <end position="545"/>
    </location>
</feature>
<feature type="domain" description="Glutamine amidotransferase type-1" evidence="1">
    <location>
        <begin position="291"/>
        <end position="542"/>
    </location>
</feature>
<feature type="region of interest" description="Amidoligase domain" evidence="1">
    <location>
        <begin position="1"/>
        <end position="266"/>
    </location>
</feature>
<feature type="active site" description="Nucleophile; for glutamine hydrolysis" evidence="1">
    <location>
        <position position="379"/>
    </location>
</feature>
<feature type="active site" evidence="1">
    <location>
        <position position="515"/>
    </location>
</feature>
<feature type="active site" evidence="1">
    <location>
        <position position="517"/>
    </location>
</feature>
<feature type="binding site" evidence="1">
    <location>
        <position position="14"/>
    </location>
    <ligand>
        <name>CTP</name>
        <dbReference type="ChEBI" id="CHEBI:37563"/>
        <note>allosteric inhibitor</note>
    </ligand>
</feature>
<feature type="binding site" evidence="1">
    <location>
        <position position="14"/>
    </location>
    <ligand>
        <name>UTP</name>
        <dbReference type="ChEBI" id="CHEBI:46398"/>
    </ligand>
</feature>
<feature type="binding site" evidence="1">
    <location>
        <begin position="15"/>
        <end position="20"/>
    </location>
    <ligand>
        <name>ATP</name>
        <dbReference type="ChEBI" id="CHEBI:30616"/>
    </ligand>
</feature>
<feature type="binding site" evidence="1">
    <location>
        <position position="72"/>
    </location>
    <ligand>
        <name>ATP</name>
        <dbReference type="ChEBI" id="CHEBI:30616"/>
    </ligand>
</feature>
<feature type="binding site" evidence="1">
    <location>
        <position position="72"/>
    </location>
    <ligand>
        <name>Mg(2+)</name>
        <dbReference type="ChEBI" id="CHEBI:18420"/>
    </ligand>
</feature>
<feature type="binding site" evidence="1">
    <location>
        <position position="140"/>
    </location>
    <ligand>
        <name>Mg(2+)</name>
        <dbReference type="ChEBI" id="CHEBI:18420"/>
    </ligand>
</feature>
<feature type="binding site" evidence="1">
    <location>
        <begin position="147"/>
        <end position="149"/>
    </location>
    <ligand>
        <name>CTP</name>
        <dbReference type="ChEBI" id="CHEBI:37563"/>
        <note>allosteric inhibitor</note>
    </ligand>
</feature>
<feature type="binding site" evidence="1">
    <location>
        <begin position="187"/>
        <end position="192"/>
    </location>
    <ligand>
        <name>CTP</name>
        <dbReference type="ChEBI" id="CHEBI:37563"/>
        <note>allosteric inhibitor</note>
    </ligand>
</feature>
<feature type="binding site" evidence="1">
    <location>
        <begin position="187"/>
        <end position="192"/>
    </location>
    <ligand>
        <name>UTP</name>
        <dbReference type="ChEBI" id="CHEBI:46398"/>
    </ligand>
</feature>
<feature type="binding site" evidence="1">
    <location>
        <position position="223"/>
    </location>
    <ligand>
        <name>CTP</name>
        <dbReference type="ChEBI" id="CHEBI:37563"/>
        <note>allosteric inhibitor</note>
    </ligand>
</feature>
<feature type="binding site" evidence="1">
    <location>
        <position position="223"/>
    </location>
    <ligand>
        <name>UTP</name>
        <dbReference type="ChEBI" id="CHEBI:46398"/>
    </ligand>
</feature>
<feature type="binding site" evidence="1">
    <location>
        <begin position="239"/>
        <end position="241"/>
    </location>
    <ligand>
        <name>ATP</name>
        <dbReference type="ChEBI" id="CHEBI:30616"/>
    </ligand>
</feature>
<feature type="binding site" evidence="1">
    <location>
        <position position="352"/>
    </location>
    <ligand>
        <name>L-glutamine</name>
        <dbReference type="ChEBI" id="CHEBI:58359"/>
    </ligand>
</feature>
<feature type="binding site" evidence="1">
    <location>
        <begin position="380"/>
        <end position="383"/>
    </location>
    <ligand>
        <name>L-glutamine</name>
        <dbReference type="ChEBI" id="CHEBI:58359"/>
    </ligand>
</feature>
<feature type="binding site" evidence="1">
    <location>
        <position position="403"/>
    </location>
    <ligand>
        <name>L-glutamine</name>
        <dbReference type="ChEBI" id="CHEBI:58359"/>
    </ligand>
</feature>
<feature type="binding site" evidence="1">
    <location>
        <position position="470"/>
    </location>
    <ligand>
        <name>L-glutamine</name>
        <dbReference type="ChEBI" id="CHEBI:58359"/>
    </ligand>
</feature>
<gene>
    <name evidence="1" type="primary">pyrG</name>
    <name type="ordered locus">HI_1077</name>
</gene>
<accession>P44341</accession>
<protein>
    <recommendedName>
        <fullName evidence="1">CTP synthase</fullName>
        <ecNumber evidence="1">6.3.4.2</ecNumber>
    </recommendedName>
    <alternativeName>
        <fullName evidence="1">Cytidine 5'-triphosphate synthase</fullName>
    </alternativeName>
    <alternativeName>
        <fullName evidence="1">Cytidine triphosphate synthetase</fullName>
        <shortName evidence="1">CTP synthetase</shortName>
        <shortName evidence="1">CTPS</shortName>
    </alternativeName>
    <alternativeName>
        <fullName evidence="1">UTP--ammonia ligase</fullName>
    </alternativeName>
</protein>
<reference key="1">
    <citation type="journal article" date="1995" name="Science">
        <title>Whole-genome random sequencing and assembly of Haemophilus influenzae Rd.</title>
        <authorList>
            <person name="Fleischmann R.D."/>
            <person name="Adams M.D."/>
            <person name="White O."/>
            <person name="Clayton R.A."/>
            <person name="Kirkness E.F."/>
            <person name="Kerlavage A.R."/>
            <person name="Bult C.J."/>
            <person name="Tomb J.-F."/>
            <person name="Dougherty B.A."/>
            <person name="Merrick J.M."/>
            <person name="McKenney K."/>
            <person name="Sutton G.G."/>
            <person name="FitzHugh W."/>
            <person name="Fields C.A."/>
            <person name="Gocayne J.D."/>
            <person name="Scott J.D."/>
            <person name="Shirley R."/>
            <person name="Liu L.-I."/>
            <person name="Glodek A."/>
            <person name="Kelley J.M."/>
            <person name="Weidman J.F."/>
            <person name="Phillips C.A."/>
            <person name="Spriggs T."/>
            <person name="Hedblom E."/>
            <person name="Cotton M.D."/>
            <person name="Utterback T.R."/>
            <person name="Hanna M.C."/>
            <person name="Nguyen D.T."/>
            <person name="Saudek D.M."/>
            <person name="Brandon R.C."/>
            <person name="Fine L.D."/>
            <person name="Fritchman J.L."/>
            <person name="Fuhrmann J.L."/>
            <person name="Geoghagen N.S.M."/>
            <person name="Gnehm C.L."/>
            <person name="McDonald L.A."/>
            <person name="Small K.V."/>
            <person name="Fraser C.M."/>
            <person name="Smith H.O."/>
            <person name="Venter J.C."/>
        </authorList>
    </citation>
    <scope>NUCLEOTIDE SEQUENCE [LARGE SCALE GENOMIC DNA]</scope>
    <source>
        <strain>ATCC 51907 / DSM 11121 / KW20 / Rd</strain>
    </source>
</reference>
<organism>
    <name type="scientific">Haemophilus influenzae (strain ATCC 51907 / DSM 11121 / KW20 / Rd)</name>
    <dbReference type="NCBI Taxonomy" id="71421"/>
    <lineage>
        <taxon>Bacteria</taxon>
        <taxon>Pseudomonadati</taxon>
        <taxon>Pseudomonadota</taxon>
        <taxon>Gammaproteobacteria</taxon>
        <taxon>Pasteurellales</taxon>
        <taxon>Pasteurellaceae</taxon>
        <taxon>Haemophilus</taxon>
    </lineage>
</organism>